<evidence type="ECO:0000250" key="1">
    <source>
        <dbReference type="UniProtKB" id="P00410"/>
    </source>
</evidence>
<evidence type="ECO:0000255" key="2"/>
<evidence type="ECO:0000305" key="3"/>
<geneLocation type="mitochondrion"/>
<proteinExistence type="inferred from homology"/>
<accession>P27168</accession>
<reference key="1">
    <citation type="journal article" date="1992" name="Mol. Gen. Genet.">
        <title>The coxII gene in carrot mitochondria contains two introns.</title>
        <authorList>
            <person name="Lippok B."/>
            <person name="Brennicke A."/>
            <person name="Wissinger B."/>
        </authorList>
    </citation>
    <scope>NUCLEOTIDE SEQUENCE [GENOMIC DNA]</scope>
    <source>
        <strain>cv. Sativum</strain>
    </source>
</reference>
<reference key="2">
    <citation type="journal article" date="1987" name="Plant Physiol.">
        <title>Cytochrome oxidase subunit II gene from carrot contains an intron.</title>
        <authorList>
            <person name="Turano F.J."/>
            <person name="de Bonte L.R."/>
            <person name="Wilson K.G."/>
            <person name="Matthews B.F."/>
        </authorList>
    </citation>
    <scope>NUCLEOTIDE SEQUENCE [GENOMIC DNA] OF 25-113</scope>
</reference>
<feature type="chain" id="PRO_0000183567" description="Cytochrome c oxidase subunit 2">
    <location>
        <begin position="1"/>
        <end position="261"/>
    </location>
</feature>
<feature type="topological domain" description="Mitochondrial intermembrane" evidence="2">
    <location>
        <begin position="1"/>
        <end position="34"/>
    </location>
</feature>
<feature type="transmembrane region" description="Helical" evidence="2">
    <location>
        <begin position="35"/>
        <end position="55"/>
    </location>
</feature>
<feature type="topological domain" description="Mitochondrial matrix" evidence="2">
    <location>
        <begin position="56"/>
        <end position="87"/>
    </location>
</feature>
<feature type="transmembrane region" description="Helical" evidence="2">
    <location>
        <begin position="88"/>
        <end position="108"/>
    </location>
</feature>
<feature type="topological domain" description="Mitochondrial intermembrane" evidence="2">
    <location>
        <begin position="109"/>
        <end position="261"/>
    </location>
</feature>
<feature type="binding site" evidence="1">
    <location>
        <position position="188"/>
    </location>
    <ligand>
        <name>Cu cation</name>
        <dbReference type="ChEBI" id="CHEBI:23378"/>
        <label>A1</label>
    </ligand>
</feature>
<feature type="binding site" evidence="1">
    <location>
        <position position="223"/>
    </location>
    <ligand>
        <name>Cu cation</name>
        <dbReference type="ChEBI" id="CHEBI:23378"/>
        <label>A1</label>
    </ligand>
</feature>
<feature type="binding site" evidence="1">
    <location>
        <position position="223"/>
    </location>
    <ligand>
        <name>Cu cation</name>
        <dbReference type="ChEBI" id="CHEBI:23378"/>
        <label>A2</label>
    </ligand>
</feature>
<feature type="binding site" evidence="1">
    <location>
        <position position="225"/>
    </location>
    <ligand>
        <name>Cu cation</name>
        <dbReference type="ChEBI" id="CHEBI:23378"/>
        <label>A2</label>
    </ligand>
</feature>
<feature type="binding site" evidence="1">
    <location>
        <position position="225"/>
    </location>
    <ligand>
        <name>Mg(2+)</name>
        <dbReference type="ChEBI" id="CHEBI:18420"/>
        <note>ligand shared with subunit 1</note>
    </ligand>
</feature>
<feature type="binding site" evidence="1">
    <location>
        <position position="227"/>
    </location>
    <ligand>
        <name>Cu cation</name>
        <dbReference type="ChEBI" id="CHEBI:23378"/>
        <label>A1</label>
    </ligand>
</feature>
<feature type="binding site" evidence="1">
    <location>
        <position position="227"/>
    </location>
    <ligand>
        <name>Cu cation</name>
        <dbReference type="ChEBI" id="CHEBI:23378"/>
        <label>A2</label>
    </ligand>
</feature>
<feature type="binding site" evidence="1">
    <location>
        <position position="231"/>
    </location>
    <ligand>
        <name>Cu cation</name>
        <dbReference type="ChEBI" id="CHEBI:23378"/>
        <label>A2</label>
    </ligand>
</feature>
<keyword id="KW-0186">Copper</keyword>
<keyword id="KW-0249">Electron transport</keyword>
<keyword id="KW-0460">Magnesium</keyword>
<keyword id="KW-0472">Membrane</keyword>
<keyword id="KW-0479">Metal-binding</keyword>
<keyword id="KW-0496">Mitochondrion</keyword>
<keyword id="KW-0999">Mitochondrion inner membrane</keyword>
<keyword id="KW-0679">Respiratory chain</keyword>
<keyword id="KW-1278">Translocase</keyword>
<keyword id="KW-0812">Transmembrane</keyword>
<keyword id="KW-1133">Transmembrane helix</keyword>
<keyword id="KW-0813">Transport</keyword>
<sequence>MSFTGIFHFFTNSPCDAAEPWQLGSQDAATPMMQGIIDLHHDIFFFLILILVFVSRILVRALWHFHSKKNPIPQRIVHGTTIEILRTIFPSIIPMFIAIPSFALLYSMDEVVVDPAMTIKAIGHQWYRTYEYSDYNSSDEQSLTFDSYTIPEDDPELGQSRLLEVDNRVVVPAKTHLRIIVTSADVPHSWAVPSSGVKCDAVPGRLNQISISVQREGVYYGQCSEICGTNHAFTPIVVEAVSRKDYGSRVSNQLIPQTGEA</sequence>
<gene>
    <name type="primary">COX2</name>
    <name type="synonym">COXII</name>
</gene>
<organism>
    <name type="scientific">Daucus carota</name>
    <name type="common">Wild carrot</name>
    <dbReference type="NCBI Taxonomy" id="4039"/>
    <lineage>
        <taxon>Eukaryota</taxon>
        <taxon>Viridiplantae</taxon>
        <taxon>Streptophyta</taxon>
        <taxon>Embryophyta</taxon>
        <taxon>Tracheophyta</taxon>
        <taxon>Spermatophyta</taxon>
        <taxon>Magnoliopsida</taxon>
        <taxon>eudicotyledons</taxon>
        <taxon>Gunneridae</taxon>
        <taxon>Pentapetalae</taxon>
        <taxon>asterids</taxon>
        <taxon>campanulids</taxon>
        <taxon>Apiales</taxon>
        <taxon>Apiaceae</taxon>
        <taxon>Apioideae</taxon>
        <taxon>Scandiceae</taxon>
        <taxon>Daucinae</taxon>
        <taxon>Daucus</taxon>
        <taxon>Daucus sect. Daucus</taxon>
    </lineage>
</organism>
<dbReference type="EC" id="7.1.1.9"/>
<dbReference type="EMBL" id="X63625">
    <property type="protein sequence ID" value="CAA45171.1"/>
    <property type="molecule type" value="Genomic_DNA"/>
</dbReference>
<dbReference type="EMBL" id="M19054">
    <property type="protein sequence ID" value="AAA70199.1"/>
    <property type="molecule type" value="Genomic_DNA"/>
</dbReference>
<dbReference type="PIR" id="S20464">
    <property type="entry name" value="OBPZ2M"/>
</dbReference>
<dbReference type="SMR" id="P27168"/>
<dbReference type="GO" id="GO:0005743">
    <property type="term" value="C:mitochondrial inner membrane"/>
    <property type="evidence" value="ECO:0007669"/>
    <property type="project" value="UniProtKB-SubCell"/>
</dbReference>
<dbReference type="GO" id="GO:0005507">
    <property type="term" value="F:copper ion binding"/>
    <property type="evidence" value="ECO:0007669"/>
    <property type="project" value="InterPro"/>
</dbReference>
<dbReference type="GO" id="GO:0004129">
    <property type="term" value="F:cytochrome-c oxidase activity"/>
    <property type="evidence" value="ECO:0007669"/>
    <property type="project" value="UniProtKB-EC"/>
</dbReference>
<dbReference type="GO" id="GO:0042773">
    <property type="term" value="P:ATP synthesis coupled electron transport"/>
    <property type="evidence" value="ECO:0007669"/>
    <property type="project" value="TreeGrafter"/>
</dbReference>
<dbReference type="CDD" id="cd13912">
    <property type="entry name" value="CcO_II_C"/>
    <property type="match status" value="1"/>
</dbReference>
<dbReference type="FunFam" id="1.10.287.90:FF:000004">
    <property type="entry name" value="Cytochrome c oxidase subunit 2"/>
    <property type="match status" value="1"/>
</dbReference>
<dbReference type="FunFam" id="2.60.40.420:FF:000001">
    <property type="entry name" value="Cytochrome c oxidase subunit 2"/>
    <property type="match status" value="1"/>
</dbReference>
<dbReference type="Gene3D" id="1.10.287.90">
    <property type="match status" value="1"/>
</dbReference>
<dbReference type="Gene3D" id="2.60.40.420">
    <property type="entry name" value="Cupredoxins - blue copper proteins"/>
    <property type="match status" value="1"/>
</dbReference>
<dbReference type="InterPro" id="IPR045187">
    <property type="entry name" value="CcO_II"/>
</dbReference>
<dbReference type="InterPro" id="IPR002429">
    <property type="entry name" value="CcO_II-like_C"/>
</dbReference>
<dbReference type="InterPro" id="IPR034210">
    <property type="entry name" value="CcO_II_C"/>
</dbReference>
<dbReference type="InterPro" id="IPR008972">
    <property type="entry name" value="Cupredoxin"/>
</dbReference>
<dbReference type="InterPro" id="IPR014222">
    <property type="entry name" value="Cyt_c_oxidase_su2"/>
</dbReference>
<dbReference type="InterPro" id="IPR011759">
    <property type="entry name" value="Cyt_c_oxidase_su2_TM_dom"/>
</dbReference>
<dbReference type="InterPro" id="IPR036257">
    <property type="entry name" value="Cyt_c_oxidase_su2_TM_sf"/>
</dbReference>
<dbReference type="NCBIfam" id="TIGR02866">
    <property type="entry name" value="CoxB"/>
    <property type="match status" value="1"/>
</dbReference>
<dbReference type="PANTHER" id="PTHR22888:SF9">
    <property type="entry name" value="CYTOCHROME C OXIDASE SUBUNIT 2"/>
    <property type="match status" value="1"/>
</dbReference>
<dbReference type="PANTHER" id="PTHR22888">
    <property type="entry name" value="CYTOCHROME C OXIDASE, SUBUNIT II"/>
    <property type="match status" value="1"/>
</dbReference>
<dbReference type="Pfam" id="PF00116">
    <property type="entry name" value="COX2"/>
    <property type="match status" value="1"/>
</dbReference>
<dbReference type="Pfam" id="PF02790">
    <property type="entry name" value="COX2_TM"/>
    <property type="match status" value="1"/>
</dbReference>
<dbReference type="PRINTS" id="PR01166">
    <property type="entry name" value="CYCOXIDASEII"/>
</dbReference>
<dbReference type="SUPFAM" id="SSF49503">
    <property type="entry name" value="Cupredoxins"/>
    <property type="match status" value="1"/>
</dbReference>
<dbReference type="SUPFAM" id="SSF81464">
    <property type="entry name" value="Cytochrome c oxidase subunit II-like, transmembrane region"/>
    <property type="match status" value="1"/>
</dbReference>
<dbReference type="PROSITE" id="PS50857">
    <property type="entry name" value="COX2_CUA"/>
    <property type="match status" value="1"/>
</dbReference>
<dbReference type="PROSITE" id="PS50999">
    <property type="entry name" value="COX2_TM"/>
    <property type="match status" value="1"/>
</dbReference>
<comment type="function">
    <text evidence="1">Component of the cytochrome c oxidase, the last enzyme in the mitochondrial electron transport chain which drives oxidative phosphorylation. The respiratory chain contains 3 multisubunit complexes succinate dehydrogenase (complex II, CII), ubiquinol-cytochrome c oxidoreductase (cytochrome b-c1 complex, complex III, CIII) and cytochrome c oxidase (complex IV, CIV), that cooperate to transfer electrons derived from NADH and succinate to molecular oxygen, creating an electrochemical gradient over the inner membrane that drives transmembrane transport and the ATP synthase. Cytochrome c oxidase is the component of the respiratory chain that catalyzes the reduction of oxygen to water. Electrons originating from reduced cytochrome c in the intermembrane space (IMS) are transferred via the dinuclear copper A center (CU(A)) of subunit 2 and heme A of subunit 1 to the active site in subunit 1, a binuclear center (BNC) formed by heme A3 and copper B (CU(B)). The BNC reduces molecular oxygen to 2 water molecules using 4 electrons from cytochrome c in the IMS and 4 protons from the mitochondrial matrix.</text>
</comment>
<comment type="catalytic activity">
    <reaction evidence="1">
        <text>4 Fe(II)-[cytochrome c] + O2 + 8 H(+)(in) = 4 Fe(III)-[cytochrome c] + 2 H2O + 4 H(+)(out)</text>
        <dbReference type="Rhea" id="RHEA:11436"/>
        <dbReference type="Rhea" id="RHEA-COMP:10350"/>
        <dbReference type="Rhea" id="RHEA-COMP:14399"/>
        <dbReference type="ChEBI" id="CHEBI:15377"/>
        <dbReference type="ChEBI" id="CHEBI:15378"/>
        <dbReference type="ChEBI" id="CHEBI:15379"/>
        <dbReference type="ChEBI" id="CHEBI:29033"/>
        <dbReference type="ChEBI" id="CHEBI:29034"/>
        <dbReference type="EC" id="7.1.1.9"/>
    </reaction>
    <physiologicalReaction direction="left-to-right" evidence="1">
        <dbReference type="Rhea" id="RHEA:11437"/>
    </physiologicalReaction>
</comment>
<comment type="cofactor">
    <cofactor evidence="1">
        <name>Cu cation</name>
        <dbReference type="ChEBI" id="CHEBI:23378"/>
    </cofactor>
    <text evidence="1">Binds a dinuclear copper A center per subunit.</text>
</comment>
<comment type="subunit">
    <text evidence="1">Component of the cytochrome c oxidase (complex IV, CIV), a multisubunit enzyme composed of a catalytic core of 3 subunits and several supernumerary subunits. The complex exists as a monomer or a dimer and forms supercomplexes (SCs) in the inner mitochondrial membrane with ubiquinol-cytochrome c oxidoreductase (cytochrome b-c1 complex, complex III, CIII).</text>
</comment>
<comment type="subcellular location">
    <subcellularLocation>
        <location evidence="1">Mitochondrion inner membrane</location>
        <topology evidence="1">Multi-pass membrane protein</topology>
    </subcellularLocation>
</comment>
<comment type="similarity">
    <text evidence="3">Belongs to the cytochrome c oxidase subunit 2 family.</text>
</comment>
<name>COX2_DAUCA</name>
<protein>
    <recommendedName>
        <fullName>Cytochrome c oxidase subunit 2</fullName>
        <ecNumber>7.1.1.9</ecNumber>
    </recommendedName>
    <alternativeName>
        <fullName>Cytochrome c oxidase polypeptide II</fullName>
    </alternativeName>
</protein>